<feature type="chain" id="PRO_0000087112" description="RecBCD enzyme subunit RecD">
    <location>
        <begin position="1"/>
        <end position="602"/>
    </location>
</feature>
<feature type="binding site" evidence="1">
    <location>
        <begin position="171"/>
        <end position="178"/>
    </location>
    <ligand>
        <name>ATP</name>
        <dbReference type="ChEBI" id="CHEBI:30616"/>
    </ligand>
</feature>
<comment type="function">
    <text evidence="1">A helicase/nuclease that prepares dsDNA breaks (DSB) for recombinational DNA repair. Binds to DSBs and unwinds DNA via a highly rapid and processive ATP-dependent bidirectional helicase activity. Unwinds dsDNA until it encounters a Chi (crossover hotspot instigator) sequence from the 3' direction. Cuts ssDNA a few nucleotides 3' to the Chi site. The properties and activities of the enzyme are changed at Chi. The Chi-altered holoenzyme produces a long 3'-ssDNA overhang and facilitates RecA-binding to the ssDNA for homologous DNA recombination and repair. Holoenzyme degrades any linearized DNA that is unable to undergo homologous recombination. In the holoenzyme this subunit has ssDNA-dependent ATPase and 5'-3' helicase activity. When added to pre-assembled RecBC greatly stimulates nuclease activity and augments holoenzyme processivity. Negatively regulates the RecA-loading ability of RecBCD.</text>
</comment>
<comment type="catalytic activity">
    <reaction evidence="1">
        <text>Couples ATP hydrolysis with the unwinding of duplex DNA at the replication fork by translocating in the 5'-3' direction. This creates two antiparallel DNA single strands (ssDNA). The leading ssDNA polymer is the template for DNA polymerase III holoenzyme which synthesizes a continuous strand.</text>
        <dbReference type="EC" id="5.6.2.3"/>
    </reaction>
</comment>
<comment type="catalytic activity">
    <reaction evidence="1">
        <text>ATP + H2O = ADP + phosphate + H(+)</text>
        <dbReference type="Rhea" id="RHEA:13065"/>
        <dbReference type="ChEBI" id="CHEBI:15377"/>
        <dbReference type="ChEBI" id="CHEBI:15378"/>
        <dbReference type="ChEBI" id="CHEBI:30616"/>
        <dbReference type="ChEBI" id="CHEBI:43474"/>
        <dbReference type="ChEBI" id="CHEBI:456216"/>
        <dbReference type="EC" id="5.6.2.3"/>
    </reaction>
</comment>
<comment type="subunit">
    <text evidence="1">Heterotrimer of RecB, RecC and RecD. All subunits contribute to DNA-binding.</text>
</comment>
<comment type="miscellaneous">
    <text evidence="1">In the RecBCD complex, RecB has a slow 3'-5' helicase, an exonuclease activity and loads RecA onto ssDNA, RecD has a fast 5'-3' helicase activity, while RecC stimulates the ATPase and processivity of the RecB helicase and contributes to recognition of the Chi site.</text>
</comment>
<comment type="similarity">
    <text evidence="1">Belongs to the RecD family.</text>
</comment>
<sequence>MLILLKKAVKLKIIRPIDFYFSQFIAQKNNIVMLVAACVSYESSRGYISLPIKYFEKHYFFSSSNEVFIKKILTLLEKKINWPVELLKHASIGNGGTSTPLVLHKKKIYLYKMWKSESNIFNYLYTKNKKNKINQKKCSKILENLFPQKNMSFQKIAVALTLINNITFIIGGPGTGKTTTILKIIIALIKSSKKSIKIQLSAPTGKATTHLNEILKNNIFDLYFSEKEKCSLPSTATTIHQLLGIQKISQKSFFNKSNCLDLDVLIIDEISMVDILMMEKILSSISKNTKLIFIGDHNQLGPIESGSILRKICYYANDGYSFKSMISIEKLTQYKLCKKINKKTTNFISDNICVLNKNYRFNKNSGIYTLSNAIFKKKTRIIESLFDNSIKNIFFYETNSSEQYKKMIKNICLNYEDFWEKIYKKATMKEIIESFQNYQVLCILHDGLFGVNIINKKLEENMYKKNIIKYFYIDGEEWYIGKPIMIINNNRALNVSNGNIGITNINKNGILQVSFLKENNTINNIPVKILRNYKTAWAITVHKSQGSEFMNTALILPNFNSHILNKDTLYTGITRSRKILSIFSDKKIFLNTIFKNTNKILF</sequence>
<gene>
    <name evidence="1" type="primary">recD</name>
    <name type="ordered locus">BU455</name>
</gene>
<dbReference type="EC" id="5.6.2.3" evidence="1"/>
<dbReference type="EMBL" id="BA000003">
    <property type="protein sequence ID" value="BAB13153.1"/>
    <property type="molecule type" value="Genomic_DNA"/>
</dbReference>
<dbReference type="RefSeq" id="NP_240267.1">
    <property type="nucleotide sequence ID" value="NC_002528.1"/>
</dbReference>
<dbReference type="RefSeq" id="WP_010896127.1">
    <property type="nucleotide sequence ID" value="NC_002528.1"/>
</dbReference>
<dbReference type="SMR" id="P57530"/>
<dbReference type="STRING" id="563178.BUAP5A_448"/>
<dbReference type="EnsemblBacteria" id="BAB13153">
    <property type="protein sequence ID" value="BAB13153"/>
    <property type="gene ID" value="BAB13153"/>
</dbReference>
<dbReference type="KEGG" id="buc:BU455"/>
<dbReference type="PATRIC" id="fig|107806.10.peg.465"/>
<dbReference type="eggNOG" id="COG0507">
    <property type="taxonomic scope" value="Bacteria"/>
</dbReference>
<dbReference type="HOGENOM" id="CLU_007524_1_2_6"/>
<dbReference type="Proteomes" id="UP000001806">
    <property type="component" value="Chromosome"/>
</dbReference>
<dbReference type="GO" id="GO:0009338">
    <property type="term" value="C:exodeoxyribonuclease V complex"/>
    <property type="evidence" value="ECO:0007669"/>
    <property type="project" value="InterPro"/>
</dbReference>
<dbReference type="GO" id="GO:0043139">
    <property type="term" value="F:5'-3' DNA helicase activity"/>
    <property type="evidence" value="ECO:0007669"/>
    <property type="project" value="UniProtKB-UniRule"/>
</dbReference>
<dbReference type="GO" id="GO:0005524">
    <property type="term" value="F:ATP binding"/>
    <property type="evidence" value="ECO:0007669"/>
    <property type="project" value="UniProtKB-UniRule"/>
</dbReference>
<dbReference type="GO" id="GO:0016887">
    <property type="term" value="F:ATP hydrolysis activity"/>
    <property type="evidence" value="ECO:0007669"/>
    <property type="project" value="InterPro"/>
</dbReference>
<dbReference type="GO" id="GO:0003677">
    <property type="term" value="F:DNA binding"/>
    <property type="evidence" value="ECO:0007669"/>
    <property type="project" value="UniProtKB-UniRule"/>
</dbReference>
<dbReference type="GO" id="GO:0008854">
    <property type="term" value="F:exodeoxyribonuclease V activity"/>
    <property type="evidence" value="ECO:0007669"/>
    <property type="project" value="UniProtKB-EC"/>
</dbReference>
<dbReference type="GO" id="GO:0017116">
    <property type="term" value="F:single-stranded DNA helicase activity"/>
    <property type="evidence" value="ECO:0007669"/>
    <property type="project" value="TreeGrafter"/>
</dbReference>
<dbReference type="GO" id="GO:0000724">
    <property type="term" value="P:double-strand break repair via homologous recombination"/>
    <property type="evidence" value="ECO:0007669"/>
    <property type="project" value="UniProtKB-UniRule"/>
</dbReference>
<dbReference type="CDD" id="cd17933">
    <property type="entry name" value="DEXSc_RecD-like"/>
    <property type="match status" value="1"/>
</dbReference>
<dbReference type="CDD" id="cd18809">
    <property type="entry name" value="SF1_C_RecD"/>
    <property type="match status" value="1"/>
</dbReference>
<dbReference type="Gene3D" id="3.40.50.300">
    <property type="entry name" value="P-loop containing nucleotide triphosphate hydrolases"/>
    <property type="match status" value="3"/>
</dbReference>
<dbReference type="Gene3D" id="1.10.10.1020">
    <property type="entry name" value="RecBCD complex, subunit RecD, N-terminal domain"/>
    <property type="match status" value="1"/>
</dbReference>
<dbReference type="HAMAP" id="MF_01487">
    <property type="entry name" value="RecD"/>
    <property type="match status" value="1"/>
</dbReference>
<dbReference type="InterPro" id="IPR003593">
    <property type="entry name" value="AAA+_ATPase"/>
</dbReference>
<dbReference type="InterPro" id="IPR050534">
    <property type="entry name" value="Coronavir_polyprotein_1ab"/>
</dbReference>
<dbReference type="InterPro" id="IPR027417">
    <property type="entry name" value="P-loop_NTPase"/>
</dbReference>
<dbReference type="InterPro" id="IPR006344">
    <property type="entry name" value="RecD"/>
</dbReference>
<dbReference type="InterPro" id="IPR049550">
    <property type="entry name" value="RecD_N"/>
</dbReference>
<dbReference type="InterPro" id="IPR041851">
    <property type="entry name" value="RecD_N_sf"/>
</dbReference>
<dbReference type="InterPro" id="IPR027785">
    <property type="entry name" value="UvrD-like_helicase_C"/>
</dbReference>
<dbReference type="NCBIfam" id="TIGR01447">
    <property type="entry name" value="recD"/>
    <property type="match status" value="1"/>
</dbReference>
<dbReference type="PANTHER" id="PTHR43788:SF6">
    <property type="entry name" value="DNA HELICASE B"/>
    <property type="match status" value="1"/>
</dbReference>
<dbReference type="PANTHER" id="PTHR43788">
    <property type="entry name" value="DNA2/NAM7 HELICASE FAMILY MEMBER"/>
    <property type="match status" value="1"/>
</dbReference>
<dbReference type="Pfam" id="PF13245">
    <property type="entry name" value="AAA_19"/>
    <property type="match status" value="1"/>
</dbReference>
<dbReference type="Pfam" id="PF21185">
    <property type="entry name" value="RecD_N"/>
    <property type="match status" value="1"/>
</dbReference>
<dbReference type="Pfam" id="PF13538">
    <property type="entry name" value="UvrD_C_2"/>
    <property type="match status" value="1"/>
</dbReference>
<dbReference type="SMART" id="SM00382">
    <property type="entry name" value="AAA"/>
    <property type="match status" value="1"/>
</dbReference>
<dbReference type="SUPFAM" id="SSF52540">
    <property type="entry name" value="P-loop containing nucleoside triphosphate hydrolases"/>
    <property type="match status" value="2"/>
</dbReference>
<name>RECD_BUCAI</name>
<protein>
    <recommendedName>
        <fullName evidence="1">RecBCD enzyme subunit RecD</fullName>
        <ecNumber evidence="1">5.6.2.3</ecNumber>
    </recommendedName>
    <alternativeName>
        <fullName evidence="1">DNA 5'-3' helicase subunit RecB</fullName>
    </alternativeName>
    <alternativeName>
        <fullName evidence="1">Exonuclease V subunit RecD</fullName>
        <shortName evidence="1">ExoV subunit RecD</shortName>
    </alternativeName>
    <alternativeName>
        <fullName evidence="1">Helicase/nuclease RecBCD subunit RecD</fullName>
    </alternativeName>
</protein>
<organism>
    <name type="scientific">Buchnera aphidicola subsp. Acyrthosiphon pisum (strain APS)</name>
    <name type="common">Acyrthosiphon pisum symbiotic bacterium</name>
    <dbReference type="NCBI Taxonomy" id="107806"/>
    <lineage>
        <taxon>Bacteria</taxon>
        <taxon>Pseudomonadati</taxon>
        <taxon>Pseudomonadota</taxon>
        <taxon>Gammaproteobacteria</taxon>
        <taxon>Enterobacterales</taxon>
        <taxon>Erwiniaceae</taxon>
        <taxon>Buchnera</taxon>
    </lineage>
</organism>
<accession>P57530</accession>
<keyword id="KW-0067">ATP-binding</keyword>
<keyword id="KW-0227">DNA damage</keyword>
<keyword id="KW-0234">DNA repair</keyword>
<keyword id="KW-0238">DNA-binding</keyword>
<keyword id="KW-0269">Exonuclease</keyword>
<keyword id="KW-0347">Helicase</keyword>
<keyword id="KW-0378">Hydrolase</keyword>
<keyword id="KW-0413">Isomerase</keyword>
<keyword id="KW-0540">Nuclease</keyword>
<keyword id="KW-0547">Nucleotide-binding</keyword>
<keyword id="KW-1185">Reference proteome</keyword>
<proteinExistence type="inferred from homology"/>
<evidence type="ECO:0000255" key="1">
    <source>
        <dbReference type="HAMAP-Rule" id="MF_01487"/>
    </source>
</evidence>
<reference key="1">
    <citation type="journal article" date="2000" name="Nature">
        <title>Genome sequence of the endocellular bacterial symbiont of aphids Buchnera sp. APS.</title>
        <authorList>
            <person name="Shigenobu S."/>
            <person name="Watanabe H."/>
            <person name="Hattori M."/>
            <person name="Sakaki Y."/>
            <person name="Ishikawa H."/>
        </authorList>
    </citation>
    <scope>NUCLEOTIDE SEQUENCE [LARGE SCALE GENOMIC DNA]</scope>
    <source>
        <strain>APS</strain>
    </source>
</reference>